<comment type="function">
    <text evidence="1">T-cell surface glycoprotein CD1e, soluble is required for the presentation of glycolipid antigens on the cell surface. The membrane-associated form is not active (By similarity).</text>
</comment>
<comment type="subunit">
    <text evidence="1">Heterodimer with B2M (beta-2-microglobulin). The association with B2M appears to be facilitated by the presence of the propeptide (By similarity).</text>
</comment>
<comment type="subcellular location">
    <molecule>T-cell surface glycoprotein CD1e, membrane-associated</molecule>
    <subcellularLocation>
        <location evidence="1">Golgi apparatus membrane</location>
        <topology evidence="1">Single-pass type I membrane protein</topology>
    </subcellularLocation>
    <subcellularLocation>
        <location evidence="1">Early endosome</location>
    </subcellularLocation>
    <subcellularLocation>
        <location evidence="1">Late endosome</location>
    </subcellularLocation>
    <text>Predominantly localized in the trans-Golgi network in immature dendritic cells, and as a cleaved, soluble protein in the lysosome lumen of mature dendritic cells.</text>
</comment>
<comment type="subcellular location">
    <molecule>T-cell surface glycoprotein CD1e, soluble</molecule>
    <subcellularLocation>
        <location evidence="1">Lysosome lumen</location>
    </subcellularLocation>
</comment>
<comment type="PTM">
    <text evidence="1">Mono-ubiquitinated.</text>
</comment>
<comment type="PTM">
    <text evidence="1">Proteolytically cleaved in endosomes to yield a soluble form.</text>
</comment>
<keyword id="KW-1064">Adaptive immunity</keyword>
<keyword id="KW-1015">Disulfide bond</keyword>
<keyword id="KW-0967">Endosome</keyword>
<keyword id="KW-0325">Glycoprotein</keyword>
<keyword id="KW-0333">Golgi apparatus</keyword>
<keyword id="KW-0391">Immunity</keyword>
<keyword id="KW-0393">Immunoglobulin domain</keyword>
<keyword id="KW-0446">Lipid-binding</keyword>
<keyword id="KW-0458">Lysosome</keyword>
<keyword id="KW-0472">Membrane</keyword>
<keyword id="KW-1185">Reference proteome</keyword>
<keyword id="KW-0732">Signal</keyword>
<keyword id="KW-0812">Transmembrane</keyword>
<keyword id="KW-1133">Transmembrane helix</keyword>
<keyword id="KW-0832">Ubl conjugation</keyword>
<sequence>MLLLILLFFKGLVCHEKSIVGPQPLGWHHPAEAEEPLIFRLLHIASFKNHSWSHSQASAWIGDLQTHGWNSTMGTIQFLKPWSQGDFSKEELKNFEALFRLYFHDFPREVHAFAHQFQFEYPFELQISGGCKNVGKTSENFLNGAYQGSDLLSFQRSSWEPSPGAGSRAQKVCEVLSYYKDITEIVQSLLSSVCPRFLSGLIAAGKSELERQVKPEVWLSRGPSPGRGRLQLVCHVSGFHPKPVWVMWMKGQQEQKGTKTGDIPNADETWYLQATLDVAEREATGLSCRVKHSSLGGHDIIIHWGGYSILLILMYVAVIVTLVTLIVMGSWHRKQSSNRNVLSSYISNPTFPLENDTQCPRSSALQLHSAQESWIKNRILKWKRSLNQFW</sequence>
<protein>
    <recommendedName>
        <fullName>T-cell surface glycoprotein CD1e, membrane-associated</fullName>
        <shortName>mCD1e</shortName>
    </recommendedName>
    <cdAntigenName>CD1e</cdAntigenName>
    <component>
        <recommendedName>
            <fullName>T-cell surface glycoprotein CD1e, soluble</fullName>
            <shortName>sCD1e</shortName>
        </recommendedName>
    </component>
</protein>
<feature type="signal peptide" evidence="2">
    <location>
        <begin position="1"/>
        <end position="14"/>
    </location>
</feature>
<feature type="chain" id="PRO_0000014590" description="T-cell surface glycoprotein CD1e, membrane-associated">
    <location>
        <begin position="15"/>
        <end position="390"/>
    </location>
</feature>
<feature type="propeptide" id="PRO_0000379896" description="Removed in sCD1e" evidence="1">
    <location>
        <begin position="15"/>
        <end position="33"/>
    </location>
</feature>
<feature type="chain" id="PRO_0000379897" description="T-cell surface glycoprotein CD1e, soluble">
    <location>
        <begin position="34"/>
        <end position="390"/>
    </location>
</feature>
<feature type="transmembrane region" description="Helical" evidence="2">
    <location>
        <begin position="305"/>
        <end position="325"/>
    </location>
</feature>
<feature type="domain" description="Ig-like">
    <location>
        <begin position="215"/>
        <end position="306"/>
    </location>
</feature>
<feature type="glycosylation site" description="N-linked (GlcNAc...) asparagine" evidence="2">
    <location>
        <position position="49"/>
    </location>
</feature>
<feature type="glycosylation site" description="N-linked (GlcNAc...) asparagine" evidence="2">
    <location>
        <position position="70"/>
    </location>
</feature>
<feature type="disulfide bond" evidence="3">
    <location>
        <begin position="131"/>
        <end position="194"/>
    </location>
</feature>
<feature type="disulfide bond" evidence="3">
    <location>
        <begin position="234"/>
        <end position="288"/>
    </location>
</feature>
<gene>
    <name type="primary">CD1E</name>
</gene>
<dbReference type="EMBL" id="AF145490">
    <property type="protein sequence ID" value="AAF12745.1"/>
    <property type="molecule type" value="mRNA"/>
</dbReference>
<dbReference type="RefSeq" id="NP_001166215.1">
    <property type="nucleotide sequence ID" value="NM_001172744.1"/>
</dbReference>
<dbReference type="SMR" id="Q9QZY5"/>
<dbReference type="STRING" id="10141.ENSCPOP00000007364"/>
<dbReference type="GlyCosmos" id="Q9QZY5">
    <property type="glycosylation" value="2 sites, No reported glycans"/>
</dbReference>
<dbReference type="GeneID" id="100379271"/>
<dbReference type="KEGG" id="cpoc:100379271"/>
<dbReference type="CTD" id="913"/>
<dbReference type="eggNOG" id="ENOG502SJH6">
    <property type="taxonomic scope" value="Eukaryota"/>
</dbReference>
<dbReference type="InParanoid" id="Q9QZY5"/>
<dbReference type="OrthoDB" id="8890485at2759"/>
<dbReference type="Proteomes" id="UP000005447">
    <property type="component" value="Unassembled WGS sequence"/>
</dbReference>
<dbReference type="GO" id="GO:0005769">
    <property type="term" value="C:early endosome"/>
    <property type="evidence" value="ECO:0007669"/>
    <property type="project" value="UniProtKB-SubCell"/>
</dbReference>
<dbReference type="GO" id="GO:0009897">
    <property type="term" value="C:external side of plasma membrane"/>
    <property type="evidence" value="ECO:0007669"/>
    <property type="project" value="TreeGrafter"/>
</dbReference>
<dbReference type="GO" id="GO:0005615">
    <property type="term" value="C:extracellular space"/>
    <property type="evidence" value="ECO:0007669"/>
    <property type="project" value="TreeGrafter"/>
</dbReference>
<dbReference type="GO" id="GO:0000139">
    <property type="term" value="C:Golgi membrane"/>
    <property type="evidence" value="ECO:0007669"/>
    <property type="project" value="UniProtKB-SubCell"/>
</dbReference>
<dbReference type="GO" id="GO:0005770">
    <property type="term" value="C:late endosome"/>
    <property type="evidence" value="ECO:0007669"/>
    <property type="project" value="UniProtKB-SubCell"/>
</dbReference>
<dbReference type="GO" id="GO:0043202">
    <property type="term" value="C:lysosomal lumen"/>
    <property type="evidence" value="ECO:0007669"/>
    <property type="project" value="UniProtKB-SubCell"/>
</dbReference>
<dbReference type="GO" id="GO:0030883">
    <property type="term" value="F:endogenous lipid antigen binding"/>
    <property type="evidence" value="ECO:0007669"/>
    <property type="project" value="TreeGrafter"/>
</dbReference>
<dbReference type="GO" id="GO:0030884">
    <property type="term" value="F:exogenous lipid antigen binding"/>
    <property type="evidence" value="ECO:0007669"/>
    <property type="project" value="TreeGrafter"/>
</dbReference>
<dbReference type="GO" id="GO:0071723">
    <property type="term" value="F:lipopeptide binding"/>
    <property type="evidence" value="ECO:0007669"/>
    <property type="project" value="TreeGrafter"/>
</dbReference>
<dbReference type="GO" id="GO:0002250">
    <property type="term" value="P:adaptive immune response"/>
    <property type="evidence" value="ECO:0007669"/>
    <property type="project" value="UniProtKB-KW"/>
</dbReference>
<dbReference type="GO" id="GO:0048006">
    <property type="term" value="P:antigen processing and presentation, endogenous lipid antigen via MHC class Ib"/>
    <property type="evidence" value="ECO:0007669"/>
    <property type="project" value="TreeGrafter"/>
</dbReference>
<dbReference type="GO" id="GO:0048007">
    <property type="term" value="P:antigen processing and presentation, exogenous lipid antigen via MHC class Ib"/>
    <property type="evidence" value="ECO:0007669"/>
    <property type="project" value="TreeGrafter"/>
</dbReference>
<dbReference type="GO" id="GO:0001916">
    <property type="term" value="P:positive regulation of T cell mediated cytotoxicity"/>
    <property type="evidence" value="ECO:0007669"/>
    <property type="project" value="TreeGrafter"/>
</dbReference>
<dbReference type="CDD" id="cd21029">
    <property type="entry name" value="IgC1_CD1"/>
    <property type="match status" value="1"/>
</dbReference>
<dbReference type="FunFam" id="2.60.40.10:FF:000254">
    <property type="entry name" value="Antigen-presenting glycoprotein CD1d1"/>
    <property type="match status" value="1"/>
</dbReference>
<dbReference type="FunFam" id="3.30.500.10:FF:000002">
    <property type="entry name" value="Antigen-presenting glycoprotein CD1d1"/>
    <property type="match status" value="1"/>
</dbReference>
<dbReference type="Gene3D" id="2.60.40.10">
    <property type="entry name" value="Immunoglobulins"/>
    <property type="match status" value="1"/>
</dbReference>
<dbReference type="Gene3D" id="3.30.500.10">
    <property type="entry name" value="MHC class I-like antigen recognition-like"/>
    <property type="match status" value="1"/>
</dbReference>
<dbReference type="InterPro" id="IPR007110">
    <property type="entry name" value="Ig-like_dom"/>
</dbReference>
<dbReference type="InterPro" id="IPR036179">
    <property type="entry name" value="Ig-like_dom_sf"/>
</dbReference>
<dbReference type="InterPro" id="IPR013783">
    <property type="entry name" value="Ig-like_fold"/>
</dbReference>
<dbReference type="InterPro" id="IPR003597">
    <property type="entry name" value="Ig_C1-set"/>
</dbReference>
<dbReference type="InterPro" id="IPR050208">
    <property type="entry name" value="MHC_class-I_related"/>
</dbReference>
<dbReference type="InterPro" id="IPR011161">
    <property type="entry name" value="MHC_I-like_Ag-recog"/>
</dbReference>
<dbReference type="InterPro" id="IPR037055">
    <property type="entry name" value="MHC_I-like_Ag-recog_sf"/>
</dbReference>
<dbReference type="InterPro" id="IPR011162">
    <property type="entry name" value="MHC_I/II-like_Ag-recog"/>
</dbReference>
<dbReference type="PANTHER" id="PTHR16675">
    <property type="entry name" value="MHC CLASS I-RELATED"/>
    <property type="match status" value="1"/>
</dbReference>
<dbReference type="PANTHER" id="PTHR16675:SF146">
    <property type="entry name" value="T-CELL SURFACE GLYCOPROTEIN CD1E, MEMBRANE-ASSOCIATED"/>
    <property type="match status" value="1"/>
</dbReference>
<dbReference type="Pfam" id="PF07654">
    <property type="entry name" value="C1-set"/>
    <property type="match status" value="1"/>
</dbReference>
<dbReference type="Pfam" id="PF16497">
    <property type="entry name" value="MHC_I_3"/>
    <property type="match status" value="1"/>
</dbReference>
<dbReference type="SMART" id="SM00407">
    <property type="entry name" value="IGc1"/>
    <property type="match status" value="1"/>
</dbReference>
<dbReference type="SUPFAM" id="SSF48726">
    <property type="entry name" value="Immunoglobulin"/>
    <property type="match status" value="1"/>
</dbReference>
<dbReference type="SUPFAM" id="SSF54452">
    <property type="entry name" value="MHC antigen-recognition domain"/>
    <property type="match status" value="1"/>
</dbReference>
<dbReference type="PROSITE" id="PS50835">
    <property type="entry name" value="IG_LIKE"/>
    <property type="match status" value="1"/>
</dbReference>
<accession>Q9QZY5</accession>
<proteinExistence type="evidence at transcript level"/>
<evidence type="ECO:0000250" key="1"/>
<evidence type="ECO:0000255" key="2"/>
<evidence type="ECO:0000255" key="3">
    <source>
        <dbReference type="PROSITE-ProRule" id="PRU00114"/>
    </source>
</evidence>
<organism>
    <name type="scientific">Cavia porcellus</name>
    <name type="common">Guinea pig</name>
    <dbReference type="NCBI Taxonomy" id="10141"/>
    <lineage>
        <taxon>Eukaryota</taxon>
        <taxon>Metazoa</taxon>
        <taxon>Chordata</taxon>
        <taxon>Craniata</taxon>
        <taxon>Vertebrata</taxon>
        <taxon>Euteleostomi</taxon>
        <taxon>Mammalia</taxon>
        <taxon>Eutheria</taxon>
        <taxon>Euarchontoglires</taxon>
        <taxon>Glires</taxon>
        <taxon>Rodentia</taxon>
        <taxon>Hystricomorpha</taxon>
        <taxon>Caviidae</taxon>
        <taxon>Cavia</taxon>
    </lineage>
</organism>
<name>CD1E_CAVPO</name>
<reference key="1">
    <citation type="journal article" date="1999" name="J. Immunol.">
        <title>Conservation of a CD1 multigene family in the guinea pig.</title>
        <authorList>
            <person name="Dascher C.C."/>
            <person name="Hiromatsu K."/>
            <person name="Naylor J.W."/>
            <person name="Brauer P.P."/>
            <person name="Brown K.A."/>
            <person name="Storey J.R."/>
            <person name="Behar S.M."/>
            <person name="Kawasaki E.S."/>
            <person name="Porcelli S.A."/>
            <person name="Brenner M.B."/>
            <person name="LeClair K.P."/>
        </authorList>
    </citation>
    <scope>NUCLEOTIDE SEQUENCE [MRNA]</scope>
    <source>
        <strain>Hartley</strain>
        <strain>NIH 2</strain>
        <tissue>Thymus</tissue>
    </source>
</reference>